<accession>Q1CS25</accession>
<organism>
    <name type="scientific">Helicobacter pylori (strain HPAG1)</name>
    <dbReference type="NCBI Taxonomy" id="357544"/>
    <lineage>
        <taxon>Bacteria</taxon>
        <taxon>Pseudomonadati</taxon>
        <taxon>Campylobacterota</taxon>
        <taxon>Epsilonproteobacteria</taxon>
        <taxon>Campylobacterales</taxon>
        <taxon>Helicobacteraceae</taxon>
        <taxon>Helicobacter</taxon>
    </lineage>
</organism>
<sequence>MGSIGSMGKPIEGFLVAAIQFPVPIVNSRKDIDHNIESIIRTLHATKAGYPGVELIIFPEYSTQGLNTAKWLSEEFLLDVPGKETEAYAQACKEAKVYGVFSTMERNPDSNKNPYNTAIIINPQGEIILKYRKLFPWNPIEPWYPGDLGMPVCEGPGGSKLAVCICHDGMIPELAREAAYKGCNVYIRISGYSTQVNDQWILTNRSNAWHNLMYTVSVNLAGYDNVFYYFGEGQICNFDGTTLVQGHRNPWEIVTGEIYPKMADNARLSWGLENNIYNLGHRGYVAKPGGEHDAGLTYIKDLAAGKYKLPWEDHMKIKDGSIYGYPTTGGRFGK</sequence>
<reference key="1">
    <citation type="journal article" date="2006" name="Proc. Natl. Acad. Sci. U.S.A.">
        <title>The complete genome sequence of a chronic atrophic gastritis Helicobacter pylori strain: evolution during disease progression.</title>
        <authorList>
            <person name="Oh J.D."/>
            <person name="Kling-Baeckhed H."/>
            <person name="Giannakis M."/>
            <person name="Xu J."/>
            <person name="Fulton R.S."/>
            <person name="Fulton L.A."/>
            <person name="Cordum H.S."/>
            <person name="Wang C."/>
            <person name="Elliott G."/>
            <person name="Edwards J."/>
            <person name="Mardis E.R."/>
            <person name="Engstrand L.G."/>
            <person name="Gordon J.I."/>
        </authorList>
    </citation>
    <scope>NUCLEOTIDE SEQUENCE [LARGE SCALE GENOMIC DNA]</scope>
    <source>
        <strain>HPAG1</strain>
    </source>
</reference>
<comment type="function">
    <text evidence="1">Is an aliphatic amidase with a restricted substrate specificity, as it only hydrolyzes formamide.</text>
</comment>
<comment type="catalytic activity">
    <reaction evidence="1">
        <text>formamide + H2O = formate + NH4(+)</text>
        <dbReference type="Rhea" id="RHEA:21948"/>
        <dbReference type="ChEBI" id="CHEBI:15377"/>
        <dbReference type="ChEBI" id="CHEBI:15740"/>
        <dbReference type="ChEBI" id="CHEBI:16397"/>
        <dbReference type="ChEBI" id="CHEBI:28938"/>
        <dbReference type="EC" id="3.5.1.49"/>
    </reaction>
</comment>
<comment type="similarity">
    <text evidence="1">Belongs to the carbon-nitrogen hydrolase superfamily. Aliphatic amidase family.</text>
</comment>
<name>AMIF_HELPH</name>
<keyword id="KW-0378">Hydrolase</keyword>
<dbReference type="EC" id="3.5.1.49" evidence="1"/>
<dbReference type="EMBL" id="CP000241">
    <property type="protein sequence ID" value="ABF85247.1"/>
    <property type="molecule type" value="Genomic_DNA"/>
</dbReference>
<dbReference type="RefSeq" id="WP_000534765.1">
    <property type="nucleotide sequence ID" value="NC_008086.1"/>
</dbReference>
<dbReference type="SMR" id="Q1CS25"/>
<dbReference type="KEGG" id="hpa:HPAG1_1180"/>
<dbReference type="HOGENOM" id="CLU_071797_0_0_7"/>
<dbReference type="GO" id="GO:0004328">
    <property type="term" value="F:formamidase activity"/>
    <property type="evidence" value="ECO:0007669"/>
    <property type="project" value="UniProtKB-UniRule"/>
</dbReference>
<dbReference type="GO" id="GO:0050126">
    <property type="term" value="F:N-carbamoylputrescine amidase activity"/>
    <property type="evidence" value="ECO:0007669"/>
    <property type="project" value="TreeGrafter"/>
</dbReference>
<dbReference type="GO" id="GO:0033388">
    <property type="term" value="P:putrescine biosynthetic process from arginine"/>
    <property type="evidence" value="ECO:0007669"/>
    <property type="project" value="TreeGrafter"/>
</dbReference>
<dbReference type="CDD" id="cd07565">
    <property type="entry name" value="aliphatic_amidase"/>
    <property type="match status" value="1"/>
</dbReference>
<dbReference type="Gene3D" id="3.60.110.10">
    <property type="entry name" value="Carbon-nitrogen hydrolase"/>
    <property type="match status" value="1"/>
</dbReference>
<dbReference type="HAMAP" id="MF_01243">
    <property type="entry name" value="Formamidase"/>
    <property type="match status" value="1"/>
</dbReference>
<dbReference type="InterPro" id="IPR050345">
    <property type="entry name" value="Aliph_Amidase/BUP"/>
</dbReference>
<dbReference type="InterPro" id="IPR003010">
    <property type="entry name" value="C-N_Hydrolase"/>
</dbReference>
<dbReference type="InterPro" id="IPR036526">
    <property type="entry name" value="C-N_Hydrolase_sf"/>
</dbReference>
<dbReference type="InterPro" id="IPR022843">
    <property type="entry name" value="Formamidase"/>
</dbReference>
<dbReference type="NCBIfam" id="NF009803">
    <property type="entry name" value="PRK13287.1"/>
    <property type="match status" value="1"/>
</dbReference>
<dbReference type="PANTHER" id="PTHR43674:SF15">
    <property type="entry name" value="FORMAMIDASE"/>
    <property type="match status" value="1"/>
</dbReference>
<dbReference type="PANTHER" id="PTHR43674">
    <property type="entry name" value="NITRILASE C965.09-RELATED"/>
    <property type="match status" value="1"/>
</dbReference>
<dbReference type="Pfam" id="PF00795">
    <property type="entry name" value="CN_hydrolase"/>
    <property type="match status" value="1"/>
</dbReference>
<dbReference type="SUPFAM" id="SSF56317">
    <property type="entry name" value="Carbon-nitrogen hydrolase"/>
    <property type="match status" value="1"/>
</dbReference>
<dbReference type="PROSITE" id="PS50263">
    <property type="entry name" value="CN_HYDROLASE"/>
    <property type="match status" value="1"/>
</dbReference>
<protein>
    <recommendedName>
        <fullName evidence="1">Formamidase</fullName>
        <ecNumber evidence="1">3.5.1.49</ecNumber>
    </recommendedName>
    <alternativeName>
        <fullName evidence="1">Formamide amidohydrolase</fullName>
    </alternativeName>
</protein>
<proteinExistence type="inferred from homology"/>
<evidence type="ECO:0000255" key="1">
    <source>
        <dbReference type="HAMAP-Rule" id="MF_01243"/>
    </source>
</evidence>
<evidence type="ECO:0000255" key="2">
    <source>
        <dbReference type="PROSITE-ProRule" id="PRU00054"/>
    </source>
</evidence>
<feature type="chain" id="PRO_1000067061" description="Formamidase">
    <location>
        <begin position="1"/>
        <end position="334"/>
    </location>
</feature>
<feature type="domain" description="CN hydrolase" evidence="2">
    <location>
        <begin position="14"/>
        <end position="260"/>
    </location>
</feature>
<feature type="active site" description="Proton acceptor" evidence="1">
    <location>
        <position position="60"/>
    </location>
</feature>
<feature type="active site" description="Proton donor" evidence="1">
    <location>
        <position position="133"/>
    </location>
</feature>
<feature type="active site" description="Nucleophile" evidence="1">
    <location>
        <position position="166"/>
    </location>
</feature>
<gene>
    <name evidence="1" type="primary">amiF</name>
    <name type="ordered locus">HPAG1_1180</name>
</gene>